<sequence>MVNQLEMLYEGKAKKIYATDKEDMVIVHYKDDATAFNGEKKAQIESKGVLNNEITSLIFEMLNKEGIKTHFVEKLNDRDQLCKKVEIVPLEVIVRNVAAGSMAKRLGLEEGYELKTTVFELSYKDDSLGDPLINDYHAVGIGATTFEELNKIYEITAKVNEILKEAFKKQNINLIDFKLEFGRYNGEILLADEISPDTCRFWDATTGEKMDKDRFRRDMGNVINGYREVLNRLRN</sequence>
<reference key="1">
    <citation type="journal article" date="2002" name="Proc. Natl. Acad. Sci. U.S.A.">
        <title>Complete genome sequence of Clostridium perfringens, an anaerobic flesh-eater.</title>
        <authorList>
            <person name="Shimizu T."/>
            <person name="Ohtani K."/>
            <person name="Hirakawa H."/>
            <person name="Ohshima K."/>
            <person name="Yamashita A."/>
            <person name="Shiba T."/>
            <person name="Ogasawara N."/>
            <person name="Hattori M."/>
            <person name="Kuhara S."/>
            <person name="Hayashi H."/>
        </authorList>
    </citation>
    <scope>NUCLEOTIDE SEQUENCE [LARGE SCALE GENOMIC DNA]</scope>
    <source>
        <strain>13 / Type A</strain>
    </source>
</reference>
<dbReference type="EC" id="6.3.2.6" evidence="1"/>
<dbReference type="EMBL" id="BA000016">
    <property type="protein sequence ID" value="BAB80388.1"/>
    <property type="molecule type" value="Genomic_DNA"/>
</dbReference>
<dbReference type="RefSeq" id="WP_003456948.1">
    <property type="nucleotide sequence ID" value="NC_003366.1"/>
</dbReference>
<dbReference type="SMR" id="Q8XMK6"/>
<dbReference type="STRING" id="195102.gene:10489943"/>
<dbReference type="GeneID" id="93002981"/>
<dbReference type="KEGG" id="cpe:CPE0682"/>
<dbReference type="HOGENOM" id="CLU_061495_2_0_9"/>
<dbReference type="UniPathway" id="UPA00074">
    <property type="reaction ID" value="UER00131"/>
</dbReference>
<dbReference type="Proteomes" id="UP000000818">
    <property type="component" value="Chromosome"/>
</dbReference>
<dbReference type="GO" id="GO:0005524">
    <property type="term" value="F:ATP binding"/>
    <property type="evidence" value="ECO:0007669"/>
    <property type="project" value="UniProtKB-KW"/>
</dbReference>
<dbReference type="GO" id="GO:0004639">
    <property type="term" value="F:phosphoribosylaminoimidazolesuccinocarboxamide synthase activity"/>
    <property type="evidence" value="ECO:0007669"/>
    <property type="project" value="UniProtKB-UniRule"/>
</dbReference>
<dbReference type="GO" id="GO:0006189">
    <property type="term" value="P:'de novo' IMP biosynthetic process"/>
    <property type="evidence" value="ECO:0007669"/>
    <property type="project" value="UniProtKB-UniRule"/>
</dbReference>
<dbReference type="GO" id="GO:0009236">
    <property type="term" value="P:cobalamin biosynthetic process"/>
    <property type="evidence" value="ECO:0007669"/>
    <property type="project" value="InterPro"/>
</dbReference>
<dbReference type="CDD" id="cd01415">
    <property type="entry name" value="SAICAR_synt_PurC"/>
    <property type="match status" value="1"/>
</dbReference>
<dbReference type="FunFam" id="3.30.200.20:FF:000189">
    <property type="entry name" value="Phosphoribosylaminoimidazole-succinocarboxamide synthase"/>
    <property type="match status" value="1"/>
</dbReference>
<dbReference type="FunFam" id="3.30.470.20:FF:000006">
    <property type="entry name" value="Phosphoribosylaminoimidazole-succinocarboxamide synthase"/>
    <property type="match status" value="1"/>
</dbReference>
<dbReference type="Gene3D" id="3.30.470.20">
    <property type="entry name" value="ATP-grasp fold, B domain"/>
    <property type="match status" value="1"/>
</dbReference>
<dbReference type="Gene3D" id="3.30.200.20">
    <property type="entry name" value="Phosphorylase Kinase, domain 1"/>
    <property type="match status" value="1"/>
</dbReference>
<dbReference type="HAMAP" id="MF_00137">
    <property type="entry name" value="SAICAR_synth"/>
    <property type="match status" value="1"/>
</dbReference>
<dbReference type="InterPro" id="IPR028923">
    <property type="entry name" value="SAICAR_synt/ADE2_N"/>
</dbReference>
<dbReference type="InterPro" id="IPR033934">
    <property type="entry name" value="SAICAR_synt_PurC"/>
</dbReference>
<dbReference type="InterPro" id="IPR001636">
    <property type="entry name" value="SAICAR_synth"/>
</dbReference>
<dbReference type="InterPro" id="IPR050089">
    <property type="entry name" value="SAICAR_synthetase"/>
</dbReference>
<dbReference type="InterPro" id="IPR018236">
    <property type="entry name" value="SAICAR_synthetase_CS"/>
</dbReference>
<dbReference type="NCBIfam" id="TIGR00081">
    <property type="entry name" value="purC"/>
    <property type="match status" value="1"/>
</dbReference>
<dbReference type="PANTHER" id="PTHR43599">
    <property type="entry name" value="MULTIFUNCTIONAL PROTEIN ADE2"/>
    <property type="match status" value="1"/>
</dbReference>
<dbReference type="PANTHER" id="PTHR43599:SF3">
    <property type="entry name" value="SI:DKEY-6E2.2"/>
    <property type="match status" value="1"/>
</dbReference>
<dbReference type="Pfam" id="PF01259">
    <property type="entry name" value="SAICAR_synt"/>
    <property type="match status" value="1"/>
</dbReference>
<dbReference type="SUPFAM" id="SSF56104">
    <property type="entry name" value="SAICAR synthase-like"/>
    <property type="match status" value="1"/>
</dbReference>
<dbReference type="PROSITE" id="PS01057">
    <property type="entry name" value="SAICAR_SYNTHETASE_1"/>
    <property type="match status" value="1"/>
</dbReference>
<dbReference type="PROSITE" id="PS01058">
    <property type="entry name" value="SAICAR_SYNTHETASE_2"/>
    <property type="match status" value="1"/>
</dbReference>
<keyword id="KW-0067">ATP-binding</keyword>
<keyword id="KW-0436">Ligase</keyword>
<keyword id="KW-0547">Nucleotide-binding</keyword>
<keyword id="KW-0658">Purine biosynthesis</keyword>
<keyword id="KW-1185">Reference proteome</keyword>
<gene>
    <name evidence="1" type="primary">purC</name>
    <name type="ordered locus">CPE0682</name>
</gene>
<proteinExistence type="inferred from homology"/>
<accession>Q8XMK6</accession>
<feature type="chain" id="PRO_0000100818" description="Phosphoribosylaminoimidazole-succinocarboxamide synthase">
    <location>
        <begin position="1"/>
        <end position="235"/>
    </location>
</feature>
<organism>
    <name type="scientific">Clostridium perfringens (strain 13 / Type A)</name>
    <dbReference type="NCBI Taxonomy" id="195102"/>
    <lineage>
        <taxon>Bacteria</taxon>
        <taxon>Bacillati</taxon>
        <taxon>Bacillota</taxon>
        <taxon>Clostridia</taxon>
        <taxon>Eubacteriales</taxon>
        <taxon>Clostridiaceae</taxon>
        <taxon>Clostridium</taxon>
    </lineage>
</organism>
<name>PUR7_CLOPE</name>
<evidence type="ECO:0000255" key="1">
    <source>
        <dbReference type="HAMAP-Rule" id="MF_00137"/>
    </source>
</evidence>
<comment type="catalytic activity">
    <reaction evidence="1">
        <text>5-amino-1-(5-phospho-D-ribosyl)imidazole-4-carboxylate + L-aspartate + ATP = (2S)-2-[5-amino-1-(5-phospho-beta-D-ribosyl)imidazole-4-carboxamido]succinate + ADP + phosphate + 2 H(+)</text>
        <dbReference type="Rhea" id="RHEA:22628"/>
        <dbReference type="ChEBI" id="CHEBI:15378"/>
        <dbReference type="ChEBI" id="CHEBI:29991"/>
        <dbReference type="ChEBI" id="CHEBI:30616"/>
        <dbReference type="ChEBI" id="CHEBI:43474"/>
        <dbReference type="ChEBI" id="CHEBI:58443"/>
        <dbReference type="ChEBI" id="CHEBI:77657"/>
        <dbReference type="ChEBI" id="CHEBI:456216"/>
        <dbReference type="EC" id="6.3.2.6"/>
    </reaction>
</comment>
<comment type="pathway">
    <text evidence="1">Purine metabolism; IMP biosynthesis via de novo pathway; 5-amino-1-(5-phospho-D-ribosyl)imidazole-4-carboxamide from 5-amino-1-(5-phospho-D-ribosyl)imidazole-4-carboxylate: step 1/2.</text>
</comment>
<comment type="similarity">
    <text evidence="1">Belongs to the SAICAR synthetase family.</text>
</comment>
<protein>
    <recommendedName>
        <fullName evidence="1">Phosphoribosylaminoimidazole-succinocarboxamide synthase</fullName>
        <ecNumber evidence="1">6.3.2.6</ecNumber>
    </recommendedName>
    <alternativeName>
        <fullName evidence="1">SAICAR synthetase</fullName>
    </alternativeName>
</protein>